<reference key="1">
    <citation type="journal article" date="2013" name="Plant Physiol.">
        <title>A Nostoc punctiforme Sugar Transporter Necessary to Establish a Cyanobacterium-Plant Symbiosis.</title>
        <authorList>
            <person name="Ekman M."/>
            <person name="Picossi S."/>
            <person name="Campbell E.L."/>
            <person name="Meeks J.C."/>
            <person name="Flores E."/>
        </authorList>
    </citation>
    <scope>NUCLEOTIDE SEQUENCE [LARGE SCALE GENOMIC DNA]</scope>
    <source>
        <strain>ATCC 29133 / PCC 73102</strain>
    </source>
</reference>
<organism>
    <name type="scientific">Nostoc punctiforme (strain ATCC 29133 / PCC 73102)</name>
    <dbReference type="NCBI Taxonomy" id="63737"/>
    <lineage>
        <taxon>Bacteria</taxon>
        <taxon>Bacillati</taxon>
        <taxon>Cyanobacteriota</taxon>
        <taxon>Cyanophyceae</taxon>
        <taxon>Nostocales</taxon>
        <taxon>Nostocaceae</taxon>
        <taxon>Nostoc</taxon>
    </lineage>
</organism>
<proteinExistence type="inferred from homology"/>
<keyword id="KW-0472">Membrane</keyword>
<keyword id="KW-0602">Photosynthesis</keyword>
<keyword id="KW-0604">Photosystem II</keyword>
<keyword id="KW-1185">Reference proteome</keyword>
<keyword id="KW-0793">Thylakoid</keyword>
<feature type="chain" id="PRO_1000144632" description="Photosystem II reaction center Psb28 protein">
    <location>
        <begin position="1"/>
        <end position="113"/>
    </location>
</feature>
<name>PSB28_NOSP7</name>
<evidence type="ECO:0000255" key="1">
    <source>
        <dbReference type="HAMAP-Rule" id="MF_01370"/>
    </source>
</evidence>
<dbReference type="EMBL" id="CP001037">
    <property type="protein sequence ID" value="ACC82324.1"/>
    <property type="molecule type" value="Genomic_DNA"/>
</dbReference>
<dbReference type="RefSeq" id="WP_012410292.1">
    <property type="nucleotide sequence ID" value="NC_010628.1"/>
</dbReference>
<dbReference type="SMR" id="B2J5G7"/>
<dbReference type="STRING" id="63737.Npun_R3943"/>
<dbReference type="EnsemblBacteria" id="ACC82324">
    <property type="protein sequence ID" value="ACC82324"/>
    <property type="gene ID" value="Npun_R3943"/>
</dbReference>
<dbReference type="KEGG" id="npu:Npun_R3943"/>
<dbReference type="eggNOG" id="ENOG5031GDS">
    <property type="taxonomic scope" value="Bacteria"/>
</dbReference>
<dbReference type="HOGENOM" id="CLU_137323_1_0_3"/>
<dbReference type="OrthoDB" id="559598at2"/>
<dbReference type="PhylomeDB" id="B2J5G7"/>
<dbReference type="Proteomes" id="UP000001191">
    <property type="component" value="Chromosome"/>
</dbReference>
<dbReference type="GO" id="GO:0009654">
    <property type="term" value="C:photosystem II oxygen evolving complex"/>
    <property type="evidence" value="ECO:0007669"/>
    <property type="project" value="InterPro"/>
</dbReference>
<dbReference type="GO" id="GO:0031676">
    <property type="term" value="C:plasma membrane-derived thylakoid membrane"/>
    <property type="evidence" value="ECO:0007669"/>
    <property type="project" value="UniProtKB-SubCell"/>
</dbReference>
<dbReference type="GO" id="GO:0015979">
    <property type="term" value="P:photosynthesis"/>
    <property type="evidence" value="ECO:0007669"/>
    <property type="project" value="UniProtKB-UniRule"/>
</dbReference>
<dbReference type="Gene3D" id="2.40.30.220">
    <property type="entry name" value="Photosystem II Psb28"/>
    <property type="match status" value="1"/>
</dbReference>
<dbReference type="HAMAP" id="MF_01370">
    <property type="entry name" value="PSII_Psb28"/>
    <property type="match status" value="1"/>
</dbReference>
<dbReference type="InterPro" id="IPR038676">
    <property type="entry name" value="Psb28_c1_sf"/>
</dbReference>
<dbReference type="InterPro" id="IPR005610">
    <property type="entry name" value="PSII_Psb28_class-1"/>
</dbReference>
<dbReference type="NCBIfam" id="TIGR03047">
    <property type="entry name" value="PS_II_psb28"/>
    <property type="match status" value="1"/>
</dbReference>
<dbReference type="PANTHER" id="PTHR34963">
    <property type="match status" value="1"/>
</dbReference>
<dbReference type="PANTHER" id="PTHR34963:SF2">
    <property type="entry name" value="PHOTOSYSTEM II REACTION CENTER PSB28 PROTEIN, CHLOROPLASTIC"/>
    <property type="match status" value="1"/>
</dbReference>
<dbReference type="Pfam" id="PF03912">
    <property type="entry name" value="Psb28"/>
    <property type="match status" value="1"/>
</dbReference>
<protein>
    <recommendedName>
        <fullName evidence="1">Photosystem II reaction center Psb28 protein</fullName>
    </recommendedName>
    <alternativeName>
        <fullName evidence="1">Photosystem II 13 kDa protein</fullName>
    </alternativeName>
    <alternativeName>
        <fullName evidence="1">Photosystem II reaction center W protein</fullName>
    </alternativeName>
</protein>
<gene>
    <name evidence="1" type="primary">psb28</name>
    <name type="ordered locus">Npun_R3943</name>
</gene>
<comment type="subunit">
    <text evidence="1">Part of the photosystem II complex.</text>
</comment>
<comment type="subcellular location">
    <subcellularLocation>
        <location evidence="1">Cellular thylakoid membrane</location>
        <topology evidence="1">Peripheral membrane protein</topology>
        <orientation evidence="1">Cytoplasmic side</orientation>
    </subcellularLocation>
</comment>
<comment type="similarity">
    <text evidence="1">Belongs to the Psb28 family.</text>
</comment>
<accession>B2J5G7</accession>
<sequence>MAKIQFSRGLDEVVIPEVRLTRSRTGDSGTATFIFTNPKILDQGSTEDITGMYLSDEEGEIITREVKAKFVNGKPEALEALYVMKSAQEWDRFMRFMERYAEENDLGLSKAEK</sequence>